<name>ZAPA_SALCH</name>
<gene>
    <name evidence="1" type="primary">zapA</name>
    <name type="ordered locus">SCH_3001</name>
</gene>
<protein>
    <recommendedName>
        <fullName evidence="1">Cell division protein ZapA</fullName>
    </recommendedName>
    <alternativeName>
        <fullName evidence="1">Z ring-associated protein ZapA</fullName>
    </alternativeName>
</protein>
<feature type="chain" id="PRO_0000345654" description="Cell division protein ZapA">
    <location>
        <begin position="1"/>
        <end position="109"/>
    </location>
</feature>
<feature type="coiled-coil region" evidence="1">
    <location>
        <begin position="21"/>
        <end position="97"/>
    </location>
</feature>
<proteinExistence type="inferred from homology"/>
<accession>Q57K55</accession>
<dbReference type="EMBL" id="AE017220">
    <property type="protein sequence ID" value="AAX66907.1"/>
    <property type="molecule type" value="Genomic_DNA"/>
</dbReference>
<dbReference type="RefSeq" id="WP_001276011.1">
    <property type="nucleotide sequence ID" value="NC_006905.1"/>
</dbReference>
<dbReference type="SMR" id="Q57K55"/>
<dbReference type="GeneID" id="66757358"/>
<dbReference type="KEGG" id="sec:SCH_3001"/>
<dbReference type="HOGENOM" id="CLU_116623_3_0_6"/>
<dbReference type="Proteomes" id="UP000000538">
    <property type="component" value="Chromosome"/>
</dbReference>
<dbReference type="GO" id="GO:0032153">
    <property type="term" value="C:cell division site"/>
    <property type="evidence" value="ECO:0007669"/>
    <property type="project" value="TreeGrafter"/>
</dbReference>
<dbReference type="GO" id="GO:0030428">
    <property type="term" value="C:cell septum"/>
    <property type="evidence" value="ECO:0007669"/>
    <property type="project" value="TreeGrafter"/>
</dbReference>
<dbReference type="GO" id="GO:0005829">
    <property type="term" value="C:cytosol"/>
    <property type="evidence" value="ECO:0007669"/>
    <property type="project" value="TreeGrafter"/>
</dbReference>
<dbReference type="GO" id="GO:0005886">
    <property type="term" value="C:plasma membrane"/>
    <property type="evidence" value="ECO:0007669"/>
    <property type="project" value="UniProtKB-UniRule"/>
</dbReference>
<dbReference type="GO" id="GO:0000917">
    <property type="term" value="P:division septum assembly"/>
    <property type="evidence" value="ECO:0007669"/>
    <property type="project" value="UniProtKB-KW"/>
</dbReference>
<dbReference type="GO" id="GO:0043093">
    <property type="term" value="P:FtsZ-dependent cytokinesis"/>
    <property type="evidence" value="ECO:0007669"/>
    <property type="project" value="TreeGrafter"/>
</dbReference>
<dbReference type="GO" id="GO:0000921">
    <property type="term" value="P:septin ring assembly"/>
    <property type="evidence" value="ECO:0007669"/>
    <property type="project" value="TreeGrafter"/>
</dbReference>
<dbReference type="FunFam" id="1.20.5.50:FF:000001">
    <property type="entry name" value="Cell division protein ZapA"/>
    <property type="match status" value="1"/>
</dbReference>
<dbReference type="FunFam" id="3.30.160.880:FF:000001">
    <property type="entry name" value="Cell division protein ZapA"/>
    <property type="match status" value="1"/>
</dbReference>
<dbReference type="Gene3D" id="1.20.5.50">
    <property type="match status" value="1"/>
</dbReference>
<dbReference type="Gene3D" id="3.30.160.880">
    <property type="entry name" value="Cell division protein ZapA protomer, N-terminal domain"/>
    <property type="match status" value="1"/>
</dbReference>
<dbReference type="HAMAP" id="MF_02012">
    <property type="entry name" value="ZapA_type1"/>
    <property type="match status" value="1"/>
</dbReference>
<dbReference type="InterPro" id="IPR007838">
    <property type="entry name" value="Cell_div_ZapA-like"/>
</dbReference>
<dbReference type="InterPro" id="IPR036192">
    <property type="entry name" value="Cell_div_ZapA-like_sf"/>
</dbReference>
<dbReference type="InterPro" id="IPR023771">
    <property type="entry name" value="Cell_div_ZapA_eubact"/>
</dbReference>
<dbReference type="InterPro" id="IPR042233">
    <property type="entry name" value="Cell_div_ZapA_N"/>
</dbReference>
<dbReference type="NCBIfam" id="NF008209">
    <property type="entry name" value="PRK10972.1"/>
    <property type="match status" value="1"/>
</dbReference>
<dbReference type="PANTHER" id="PTHR34981">
    <property type="entry name" value="CELL DIVISION PROTEIN ZAPA"/>
    <property type="match status" value="1"/>
</dbReference>
<dbReference type="PANTHER" id="PTHR34981:SF1">
    <property type="entry name" value="CELL DIVISION PROTEIN ZAPA"/>
    <property type="match status" value="1"/>
</dbReference>
<dbReference type="Pfam" id="PF05164">
    <property type="entry name" value="ZapA"/>
    <property type="match status" value="1"/>
</dbReference>
<dbReference type="SUPFAM" id="SSF102829">
    <property type="entry name" value="Cell division protein ZapA-like"/>
    <property type="match status" value="1"/>
</dbReference>
<organism>
    <name type="scientific">Salmonella choleraesuis (strain SC-B67)</name>
    <dbReference type="NCBI Taxonomy" id="321314"/>
    <lineage>
        <taxon>Bacteria</taxon>
        <taxon>Pseudomonadati</taxon>
        <taxon>Pseudomonadota</taxon>
        <taxon>Gammaproteobacteria</taxon>
        <taxon>Enterobacterales</taxon>
        <taxon>Enterobacteriaceae</taxon>
        <taxon>Salmonella</taxon>
    </lineage>
</organism>
<reference key="1">
    <citation type="journal article" date="2005" name="Nucleic Acids Res.">
        <title>The genome sequence of Salmonella enterica serovar Choleraesuis, a highly invasive and resistant zoonotic pathogen.</title>
        <authorList>
            <person name="Chiu C.-H."/>
            <person name="Tang P."/>
            <person name="Chu C."/>
            <person name="Hu S."/>
            <person name="Bao Q."/>
            <person name="Yu J."/>
            <person name="Chou Y.-Y."/>
            <person name="Wang H.-S."/>
            <person name="Lee Y.-S."/>
        </authorList>
    </citation>
    <scope>NUCLEOTIDE SEQUENCE [LARGE SCALE GENOMIC DNA]</scope>
    <source>
        <strain>SC-B67</strain>
    </source>
</reference>
<comment type="function">
    <text evidence="1">Activator of cell division through the inhibition of FtsZ GTPase activity, therefore promoting FtsZ assembly into bundles of protofilaments necessary for the formation of the division Z ring. It is recruited early at mid-cell but it is not essential for cell division.</text>
</comment>
<comment type="subunit">
    <text evidence="1">Homodimer. Interacts with FtsZ.</text>
</comment>
<comment type="subcellular location">
    <subcellularLocation>
        <location evidence="1">Cytoplasm</location>
    </subcellularLocation>
    <text evidence="1">Localizes at mid-cell.</text>
</comment>
<comment type="similarity">
    <text evidence="1">Belongs to the ZapA family. Type 1 subfamily.</text>
</comment>
<keyword id="KW-0131">Cell cycle</keyword>
<keyword id="KW-0132">Cell division</keyword>
<keyword id="KW-0175">Coiled coil</keyword>
<keyword id="KW-0963">Cytoplasm</keyword>
<keyword id="KW-0717">Septation</keyword>
<sequence length="109" mass="12523">MSAQPVDIQIFGRSLRVNCPPDQRDALNQAADDLNQRLQDLKVRTRVTNTEQLVFIAALNISYELTQEKAKTRDYAASMEQRIRMLQQTIEQALLDQGRITEKTGQNFE</sequence>
<evidence type="ECO:0000255" key="1">
    <source>
        <dbReference type="HAMAP-Rule" id="MF_02012"/>
    </source>
</evidence>